<keyword id="KW-0067">ATP-binding</keyword>
<keyword id="KW-0093">Biotin biosynthesis</keyword>
<keyword id="KW-0963">Cytoplasm</keyword>
<keyword id="KW-0436">Ligase</keyword>
<keyword id="KW-0460">Magnesium</keyword>
<keyword id="KW-0479">Metal-binding</keyword>
<keyword id="KW-0547">Nucleotide-binding</keyword>
<accession>Q8KZM8</accession>
<sequence>MRGFFVTGTDTEVGKTVISSGLAALLKEHNRDVGVYKPFLSGISRHHPDSDTSLLKDMSQTSLSHEDITPFAFKAPLAPYVAGKLEGKTVTMEEVLSHWGRIREKHECFIVEGAGGISVPLGEDYLVSHVIKALQLPMIIVARPHLGTINHTFLTVKYAESMGLPIAGIIINGISDSPDEDEKTNPEMIERLCGVPILGVTPKLANVTKETVLHMVKDHINLSLLMNQMGV</sequence>
<proteinExistence type="inferred from homology"/>
<feature type="chain" id="PRO_0000187947" description="ATP-dependent dethiobiotin synthetase BioD">
    <location>
        <begin position="1"/>
        <end position="231"/>
    </location>
</feature>
<feature type="active site" evidence="1">
    <location>
        <position position="37"/>
    </location>
</feature>
<feature type="binding site" evidence="1">
    <location>
        <begin position="12"/>
        <end position="17"/>
    </location>
    <ligand>
        <name>ATP</name>
        <dbReference type="ChEBI" id="CHEBI:30616"/>
    </ligand>
</feature>
<feature type="binding site" evidence="1">
    <location>
        <position position="16"/>
    </location>
    <ligand>
        <name>Mg(2+)</name>
        <dbReference type="ChEBI" id="CHEBI:18420"/>
    </ligand>
</feature>
<feature type="binding site" evidence="1">
    <location>
        <position position="41"/>
    </location>
    <ligand>
        <name>substrate</name>
    </ligand>
</feature>
<feature type="binding site" evidence="1">
    <location>
        <position position="51"/>
    </location>
    <ligand>
        <name>ATP</name>
        <dbReference type="ChEBI" id="CHEBI:30616"/>
    </ligand>
</feature>
<feature type="binding site" evidence="1">
    <location>
        <position position="51"/>
    </location>
    <ligand>
        <name>Mg(2+)</name>
        <dbReference type="ChEBI" id="CHEBI:18420"/>
    </ligand>
</feature>
<feature type="binding site" evidence="1">
    <location>
        <begin position="112"/>
        <end position="115"/>
    </location>
    <ligand>
        <name>ATP</name>
        <dbReference type="ChEBI" id="CHEBI:30616"/>
    </ligand>
</feature>
<feature type="binding site" evidence="1">
    <location>
        <position position="112"/>
    </location>
    <ligand>
        <name>Mg(2+)</name>
        <dbReference type="ChEBI" id="CHEBI:18420"/>
    </ligand>
</feature>
<feature type="binding site" evidence="1">
    <location>
        <begin position="202"/>
        <end position="204"/>
    </location>
    <ligand>
        <name>ATP</name>
        <dbReference type="ChEBI" id="CHEBI:30616"/>
    </ligand>
</feature>
<reference key="1">
    <citation type="submission" date="2002-07" db="EMBL/GenBank/DDBJ databases">
        <title>Genetic analysis of biotin operon in Bacillus subtilis natto OK2.</title>
        <authorList>
            <person name="Sasaki M."/>
            <person name="Kotanagi T."/>
            <person name="Kurusu Y."/>
        </authorList>
    </citation>
    <scope>NUCLEOTIDE SEQUENCE [GENOMIC DNA]</scope>
    <source>
        <strain>OK2</strain>
    </source>
</reference>
<evidence type="ECO:0000255" key="1">
    <source>
        <dbReference type="HAMAP-Rule" id="MF_00336"/>
    </source>
</evidence>
<comment type="function">
    <text evidence="1">Catalyzes a mechanistically unusual reaction, the ATP-dependent insertion of CO2 between the N7 and N8 nitrogen atoms of 7,8-diaminopelargonic acid (DAPA, also called 7,8-diammoniononanoate) to form a ureido ring.</text>
</comment>
<comment type="catalytic activity">
    <reaction evidence="1">
        <text>(7R,8S)-7,8-diammoniononanoate + CO2 + ATP = (4R,5S)-dethiobiotin + ADP + phosphate + 3 H(+)</text>
        <dbReference type="Rhea" id="RHEA:15805"/>
        <dbReference type="ChEBI" id="CHEBI:15378"/>
        <dbReference type="ChEBI" id="CHEBI:16526"/>
        <dbReference type="ChEBI" id="CHEBI:30616"/>
        <dbReference type="ChEBI" id="CHEBI:43474"/>
        <dbReference type="ChEBI" id="CHEBI:149469"/>
        <dbReference type="ChEBI" id="CHEBI:149473"/>
        <dbReference type="ChEBI" id="CHEBI:456216"/>
        <dbReference type="EC" id="6.3.3.3"/>
    </reaction>
</comment>
<comment type="cofactor">
    <cofactor evidence="1">
        <name>Mg(2+)</name>
        <dbReference type="ChEBI" id="CHEBI:18420"/>
    </cofactor>
</comment>
<comment type="pathway">
    <text evidence="1">Cofactor biosynthesis; biotin biosynthesis; biotin from 7,8-diaminononanoate: step 1/2.</text>
</comment>
<comment type="subunit">
    <text evidence="1">Homodimer.</text>
</comment>
<comment type="subcellular location">
    <subcellularLocation>
        <location evidence="1">Cytoplasm</location>
    </subcellularLocation>
</comment>
<comment type="similarity">
    <text evidence="1">Belongs to the dethiobiotin synthetase family.</text>
</comment>
<dbReference type="EC" id="6.3.3.3" evidence="1"/>
<dbReference type="EMBL" id="AB088066">
    <property type="protein sequence ID" value="BAC03242.1"/>
    <property type="molecule type" value="Genomic_DNA"/>
</dbReference>
<dbReference type="RefSeq" id="WP_014480604.1">
    <property type="nucleotide sequence ID" value="NZ_SJSU01000004.1"/>
</dbReference>
<dbReference type="SMR" id="Q8KZM8"/>
<dbReference type="UniPathway" id="UPA00078">
    <property type="reaction ID" value="UER00161"/>
</dbReference>
<dbReference type="GO" id="GO:0005829">
    <property type="term" value="C:cytosol"/>
    <property type="evidence" value="ECO:0007669"/>
    <property type="project" value="TreeGrafter"/>
</dbReference>
<dbReference type="GO" id="GO:0005524">
    <property type="term" value="F:ATP binding"/>
    <property type="evidence" value="ECO:0007669"/>
    <property type="project" value="UniProtKB-UniRule"/>
</dbReference>
<dbReference type="GO" id="GO:0004141">
    <property type="term" value="F:dethiobiotin synthase activity"/>
    <property type="evidence" value="ECO:0007669"/>
    <property type="project" value="UniProtKB-UniRule"/>
</dbReference>
<dbReference type="GO" id="GO:0000287">
    <property type="term" value="F:magnesium ion binding"/>
    <property type="evidence" value="ECO:0007669"/>
    <property type="project" value="UniProtKB-UniRule"/>
</dbReference>
<dbReference type="GO" id="GO:0009102">
    <property type="term" value="P:biotin biosynthetic process"/>
    <property type="evidence" value="ECO:0007669"/>
    <property type="project" value="UniProtKB-UniRule"/>
</dbReference>
<dbReference type="CDD" id="cd03109">
    <property type="entry name" value="DTBS"/>
    <property type="match status" value="1"/>
</dbReference>
<dbReference type="FunFam" id="3.40.50.300:FF:003304">
    <property type="entry name" value="ATP-dependent dethiobiotin synthetase BioD"/>
    <property type="match status" value="1"/>
</dbReference>
<dbReference type="Gene3D" id="3.40.50.300">
    <property type="entry name" value="P-loop containing nucleotide triphosphate hydrolases"/>
    <property type="match status" value="1"/>
</dbReference>
<dbReference type="HAMAP" id="MF_00336">
    <property type="entry name" value="BioD"/>
    <property type="match status" value="1"/>
</dbReference>
<dbReference type="InterPro" id="IPR004472">
    <property type="entry name" value="DTB_synth_BioD"/>
</dbReference>
<dbReference type="InterPro" id="IPR027417">
    <property type="entry name" value="P-loop_NTPase"/>
</dbReference>
<dbReference type="NCBIfam" id="TIGR00347">
    <property type="entry name" value="bioD"/>
    <property type="match status" value="1"/>
</dbReference>
<dbReference type="PANTHER" id="PTHR43210:SF2">
    <property type="entry name" value="ATP-DEPENDENT DETHIOBIOTIN SYNTHETASE BIOD 2"/>
    <property type="match status" value="1"/>
</dbReference>
<dbReference type="PANTHER" id="PTHR43210">
    <property type="entry name" value="DETHIOBIOTIN SYNTHETASE"/>
    <property type="match status" value="1"/>
</dbReference>
<dbReference type="Pfam" id="PF13500">
    <property type="entry name" value="AAA_26"/>
    <property type="match status" value="1"/>
</dbReference>
<dbReference type="PIRSF" id="PIRSF006755">
    <property type="entry name" value="DTB_synth"/>
    <property type="match status" value="1"/>
</dbReference>
<dbReference type="SUPFAM" id="SSF52540">
    <property type="entry name" value="P-loop containing nucleoside triphosphate hydrolases"/>
    <property type="match status" value="1"/>
</dbReference>
<gene>
    <name evidence="1" type="primary">bioD</name>
</gene>
<protein>
    <recommendedName>
        <fullName evidence="1">ATP-dependent dethiobiotin synthetase BioD</fullName>
        <ecNumber evidence="1">6.3.3.3</ecNumber>
    </recommendedName>
    <alternativeName>
        <fullName evidence="1">DTB synthetase</fullName>
        <shortName evidence="1">DTBS</shortName>
    </alternativeName>
    <alternativeName>
        <fullName evidence="1">Dethiobiotin synthase</fullName>
    </alternativeName>
</protein>
<organism>
    <name type="scientific">Bacillus subtilis subsp. natto</name>
    <dbReference type="NCBI Taxonomy" id="86029"/>
    <lineage>
        <taxon>Bacteria</taxon>
        <taxon>Bacillati</taxon>
        <taxon>Bacillota</taxon>
        <taxon>Bacilli</taxon>
        <taxon>Bacillales</taxon>
        <taxon>Bacillaceae</taxon>
        <taxon>Bacillus</taxon>
    </lineage>
</organism>
<name>BIOD_BACNA</name>